<organism>
    <name type="scientific">Shigella boydii serotype 4 (strain Sb227)</name>
    <dbReference type="NCBI Taxonomy" id="300268"/>
    <lineage>
        <taxon>Bacteria</taxon>
        <taxon>Pseudomonadati</taxon>
        <taxon>Pseudomonadota</taxon>
        <taxon>Gammaproteobacteria</taxon>
        <taxon>Enterobacterales</taxon>
        <taxon>Enterobacteriaceae</taxon>
        <taxon>Shigella</taxon>
    </lineage>
</organism>
<gene>
    <name evidence="1" type="primary">purA</name>
    <name type="ordered locus">SBO_4279</name>
</gene>
<evidence type="ECO:0000255" key="1">
    <source>
        <dbReference type="HAMAP-Rule" id="MF_00011"/>
    </source>
</evidence>
<accession>Q31TA7</accession>
<reference key="1">
    <citation type="journal article" date="2005" name="Nucleic Acids Res.">
        <title>Genome dynamics and diversity of Shigella species, the etiologic agents of bacillary dysentery.</title>
        <authorList>
            <person name="Yang F."/>
            <person name="Yang J."/>
            <person name="Zhang X."/>
            <person name="Chen L."/>
            <person name="Jiang Y."/>
            <person name="Yan Y."/>
            <person name="Tang X."/>
            <person name="Wang J."/>
            <person name="Xiong Z."/>
            <person name="Dong J."/>
            <person name="Xue Y."/>
            <person name="Zhu Y."/>
            <person name="Xu X."/>
            <person name="Sun L."/>
            <person name="Chen S."/>
            <person name="Nie H."/>
            <person name="Peng J."/>
            <person name="Xu J."/>
            <person name="Wang Y."/>
            <person name="Yuan Z."/>
            <person name="Wen Y."/>
            <person name="Yao Z."/>
            <person name="Shen Y."/>
            <person name="Qiang B."/>
            <person name="Hou Y."/>
            <person name="Yu J."/>
            <person name="Jin Q."/>
        </authorList>
    </citation>
    <scope>NUCLEOTIDE SEQUENCE [LARGE SCALE GENOMIC DNA]</scope>
    <source>
        <strain>Sb227</strain>
    </source>
</reference>
<sequence length="432" mass="47345">MGNNVVVLGTQWGDEGKGKIVDLLTERAKYVVRYQGGHNAGHTLVINGEKTVLHLIPSGILRENVTSIIGNGVVLSPAALMKEMKELEDRGIPVRERLLLSEACPLILDYHVALDNAREKARGAKAIGTTGRGIGPAYEDKVARRGLRVGDLFDKETFAEKLKEVMEYHNFQLVNYYKAEAVDYQKVLDDTMAVADILTSMVVDVSDLLDQARQRGDFVMFEGAQGTLLDIDHGTYPYVTSSNTTAGGVATGSGLGPRYVDYVLGILKAYSTRVGAGPFPTELFDETGEFLCKQGNEFGATTGRRRRTGWLDTVAVRRAVQLNSLSGFCLTKLDVLDGLKEVKLCVAYRMPDGREVTTTPLAADDWKGVEPIYETMPGWSESTFGVKDRSGLPQAALNYIKRIEELTGVPIDIISTGPDRTETMILRDPFDA</sequence>
<proteinExistence type="inferred from homology"/>
<feature type="chain" id="PRO_0000224318" description="Adenylosuccinate synthetase">
    <location>
        <begin position="1"/>
        <end position="432"/>
    </location>
</feature>
<feature type="active site" description="Proton acceptor" evidence="1">
    <location>
        <position position="14"/>
    </location>
</feature>
<feature type="active site" description="Proton donor" evidence="1">
    <location>
        <position position="42"/>
    </location>
</feature>
<feature type="binding site" evidence="1">
    <location>
        <begin position="13"/>
        <end position="19"/>
    </location>
    <ligand>
        <name>GTP</name>
        <dbReference type="ChEBI" id="CHEBI:37565"/>
    </ligand>
</feature>
<feature type="binding site" description="in other chain" evidence="1">
    <location>
        <begin position="14"/>
        <end position="17"/>
    </location>
    <ligand>
        <name>IMP</name>
        <dbReference type="ChEBI" id="CHEBI:58053"/>
        <note>ligand shared between dimeric partners</note>
    </ligand>
</feature>
<feature type="binding site" evidence="1">
    <location>
        <position position="14"/>
    </location>
    <ligand>
        <name>Mg(2+)</name>
        <dbReference type="ChEBI" id="CHEBI:18420"/>
    </ligand>
</feature>
<feature type="binding site" description="in other chain" evidence="1">
    <location>
        <begin position="39"/>
        <end position="42"/>
    </location>
    <ligand>
        <name>IMP</name>
        <dbReference type="ChEBI" id="CHEBI:58053"/>
        <note>ligand shared between dimeric partners</note>
    </ligand>
</feature>
<feature type="binding site" evidence="1">
    <location>
        <begin position="41"/>
        <end position="43"/>
    </location>
    <ligand>
        <name>GTP</name>
        <dbReference type="ChEBI" id="CHEBI:37565"/>
    </ligand>
</feature>
<feature type="binding site" evidence="1">
    <location>
        <position position="41"/>
    </location>
    <ligand>
        <name>Mg(2+)</name>
        <dbReference type="ChEBI" id="CHEBI:18420"/>
    </ligand>
</feature>
<feature type="binding site" description="in other chain" evidence="1">
    <location>
        <position position="130"/>
    </location>
    <ligand>
        <name>IMP</name>
        <dbReference type="ChEBI" id="CHEBI:58053"/>
        <note>ligand shared between dimeric partners</note>
    </ligand>
</feature>
<feature type="binding site" evidence="1">
    <location>
        <position position="144"/>
    </location>
    <ligand>
        <name>IMP</name>
        <dbReference type="ChEBI" id="CHEBI:58053"/>
        <note>ligand shared between dimeric partners</note>
    </ligand>
</feature>
<feature type="binding site" description="in other chain" evidence="1">
    <location>
        <position position="225"/>
    </location>
    <ligand>
        <name>IMP</name>
        <dbReference type="ChEBI" id="CHEBI:58053"/>
        <note>ligand shared between dimeric partners</note>
    </ligand>
</feature>
<feature type="binding site" description="in other chain" evidence="1">
    <location>
        <position position="240"/>
    </location>
    <ligand>
        <name>IMP</name>
        <dbReference type="ChEBI" id="CHEBI:58053"/>
        <note>ligand shared between dimeric partners</note>
    </ligand>
</feature>
<feature type="binding site" evidence="1">
    <location>
        <begin position="300"/>
        <end position="306"/>
    </location>
    <ligand>
        <name>substrate</name>
    </ligand>
</feature>
<feature type="binding site" description="in other chain" evidence="1">
    <location>
        <position position="304"/>
    </location>
    <ligand>
        <name>IMP</name>
        <dbReference type="ChEBI" id="CHEBI:58053"/>
        <note>ligand shared between dimeric partners</note>
    </ligand>
</feature>
<feature type="binding site" evidence="1">
    <location>
        <position position="306"/>
    </location>
    <ligand>
        <name>GTP</name>
        <dbReference type="ChEBI" id="CHEBI:37565"/>
    </ligand>
</feature>
<feature type="binding site" evidence="1">
    <location>
        <begin position="332"/>
        <end position="334"/>
    </location>
    <ligand>
        <name>GTP</name>
        <dbReference type="ChEBI" id="CHEBI:37565"/>
    </ligand>
</feature>
<feature type="binding site" evidence="1">
    <location>
        <begin position="415"/>
        <end position="417"/>
    </location>
    <ligand>
        <name>GTP</name>
        <dbReference type="ChEBI" id="CHEBI:37565"/>
    </ligand>
</feature>
<keyword id="KW-0963">Cytoplasm</keyword>
<keyword id="KW-0342">GTP-binding</keyword>
<keyword id="KW-0436">Ligase</keyword>
<keyword id="KW-0460">Magnesium</keyword>
<keyword id="KW-0479">Metal-binding</keyword>
<keyword id="KW-0547">Nucleotide-binding</keyword>
<keyword id="KW-0658">Purine biosynthesis</keyword>
<dbReference type="EC" id="6.3.4.4" evidence="1"/>
<dbReference type="EMBL" id="CP000036">
    <property type="protein sequence ID" value="ABB68701.1"/>
    <property type="molecule type" value="Genomic_DNA"/>
</dbReference>
<dbReference type="RefSeq" id="WP_000527955.1">
    <property type="nucleotide sequence ID" value="NC_007613.1"/>
</dbReference>
<dbReference type="SMR" id="Q31TA7"/>
<dbReference type="GeneID" id="75202411"/>
<dbReference type="KEGG" id="sbo:SBO_4279"/>
<dbReference type="HOGENOM" id="CLU_029848_0_0_6"/>
<dbReference type="UniPathway" id="UPA00075">
    <property type="reaction ID" value="UER00335"/>
</dbReference>
<dbReference type="Proteomes" id="UP000007067">
    <property type="component" value="Chromosome"/>
</dbReference>
<dbReference type="GO" id="GO:0005737">
    <property type="term" value="C:cytoplasm"/>
    <property type="evidence" value="ECO:0007669"/>
    <property type="project" value="UniProtKB-SubCell"/>
</dbReference>
<dbReference type="GO" id="GO:0004019">
    <property type="term" value="F:adenylosuccinate synthase activity"/>
    <property type="evidence" value="ECO:0007669"/>
    <property type="project" value="UniProtKB-UniRule"/>
</dbReference>
<dbReference type="GO" id="GO:0005525">
    <property type="term" value="F:GTP binding"/>
    <property type="evidence" value="ECO:0007669"/>
    <property type="project" value="UniProtKB-UniRule"/>
</dbReference>
<dbReference type="GO" id="GO:0000287">
    <property type="term" value="F:magnesium ion binding"/>
    <property type="evidence" value="ECO:0007669"/>
    <property type="project" value="UniProtKB-UniRule"/>
</dbReference>
<dbReference type="GO" id="GO:0044208">
    <property type="term" value="P:'de novo' AMP biosynthetic process"/>
    <property type="evidence" value="ECO:0007669"/>
    <property type="project" value="UniProtKB-UniRule"/>
</dbReference>
<dbReference type="GO" id="GO:0046040">
    <property type="term" value="P:IMP metabolic process"/>
    <property type="evidence" value="ECO:0007669"/>
    <property type="project" value="TreeGrafter"/>
</dbReference>
<dbReference type="CDD" id="cd03108">
    <property type="entry name" value="AdSS"/>
    <property type="match status" value="1"/>
</dbReference>
<dbReference type="FunFam" id="1.10.300.10:FF:000001">
    <property type="entry name" value="Adenylosuccinate synthetase"/>
    <property type="match status" value="1"/>
</dbReference>
<dbReference type="FunFam" id="3.90.170.10:FF:000001">
    <property type="entry name" value="Adenylosuccinate synthetase"/>
    <property type="match status" value="1"/>
</dbReference>
<dbReference type="Gene3D" id="3.40.440.10">
    <property type="entry name" value="Adenylosuccinate Synthetase, subunit A, domain 1"/>
    <property type="match status" value="1"/>
</dbReference>
<dbReference type="Gene3D" id="1.10.300.10">
    <property type="entry name" value="Adenylosuccinate Synthetase, subunit A, domain 2"/>
    <property type="match status" value="1"/>
</dbReference>
<dbReference type="Gene3D" id="3.90.170.10">
    <property type="entry name" value="Adenylosuccinate Synthetase, subunit A, domain 3"/>
    <property type="match status" value="1"/>
</dbReference>
<dbReference type="HAMAP" id="MF_00011">
    <property type="entry name" value="Adenylosucc_synth"/>
    <property type="match status" value="1"/>
</dbReference>
<dbReference type="InterPro" id="IPR018220">
    <property type="entry name" value="Adenylosuccin_syn_GTP-bd"/>
</dbReference>
<dbReference type="InterPro" id="IPR033128">
    <property type="entry name" value="Adenylosuccin_syn_Lys_AS"/>
</dbReference>
<dbReference type="InterPro" id="IPR042109">
    <property type="entry name" value="Adenylosuccinate_synth_dom1"/>
</dbReference>
<dbReference type="InterPro" id="IPR042110">
    <property type="entry name" value="Adenylosuccinate_synth_dom2"/>
</dbReference>
<dbReference type="InterPro" id="IPR042111">
    <property type="entry name" value="Adenylosuccinate_synth_dom3"/>
</dbReference>
<dbReference type="InterPro" id="IPR001114">
    <property type="entry name" value="Adenylosuccinate_synthetase"/>
</dbReference>
<dbReference type="InterPro" id="IPR027417">
    <property type="entry name" value="P-loop_NTPase"/>
</dbReference>
<dbReference type="NCBIfam" id="NF002223">
    <property type="entry name" value="PRK01117.1"/>
    <property type="match status" value="1"/>
</dbReference>
<dbReference type="NCBIfam" id="TIGR00184">
    <property type="entry name" value="purA"/>
    <property type="match status" value="1"/>
</dbReference>
<dbReference type="PANTHER" id="PTHR11846">
    <property type="entry name" value="ADENYLOSUCCINATE SYNTHETASE"/>
    <property type="match status" value="1"/>
</dbReference>
<dbReference type="PANTHER" id="PTHR11846:SF0">
    <property type="entry name" value="ADENYLOSUCCINATE SYNTHETASE"/>
    <property type="match status" value="1"/>
</dbReference>
<dbReference type="Pfam" id="PF00709">
    <property type="entry name" value="Adenylsucc_synt"/>
    <property type="match status" value="1"/>
</dbReference>
<dbReference type="SMART" id="SM00788">
    <property type="entry name" value="Adenylsucc_synt"/>
    <property type="match status" value="1"/>
</dbReference>
<dbReference type="SUPFAM" id="SSF52540">
    <property type="entry name" value="P-loop containing nucleoside triphosphate hydrolases"/>
    <property type="match status" value="1"/>
</dbReference>
<dbReference type="PROSITE" id="PS01266">
    <property type="entry name" value="ADENYLOSUCCIN_SYN_1"/>
    <property type="match status" value="1"/>
</dbReference>
<dbReference type="PROSITE" id="PS00513">
    <property type="entry name" value="ADENYLOSUCCIN_SYN_2"/>
    <property type="match status" value="1"/>
</dbReference>
<protein>
    <recommendedName>
        <fullName evidence="1">Adenylosuccinate synthetase</fullName>
        <shortName evidence="1">AMPSase</shortName>
        <shortName evidence="1">AdSS</shortName>
        <ecNumber evidence="1">6.3.4.4</ecNumber>
    </recommendedName>
    <alternativeName>
        <fullName evidence="1">IMP--aspartate ligase</fullName>
    </alternativeName>
</protein>
<name>PURA_SHIBS</name>
<comment type="function">
    <text evidence="1">Plays an important role in the de novo pathway of purine nucleotide biosynthesis. Catalyzes the first committed step in the biosynthesis of AMP from IMP.</text>
</comment>
<comment type="catalytic activity">
    <reaction evidence="1">
        <text>IMP + L-aspartate + GTP = N(6)-(1,2-dicarboxyethyl)-AMP + GDP + phosphate + 2 H(+)</text>
        <dbReference type="Rhea" id="RHEA:15753"/>
        <dbReference type="ChEBI" id="CHEBI:15378"/>
        <dbReference type="ChEBI" id="CHEBI:29991"/>
        <dbReference type="ChEBI" id="CHEBI:37565"/>
        <dbReference type="ChEBI" id="CHEBI:43474"/>
        <dbReference type="ChEBI" id="CHEBI:57567"/>
        <dbReference type="ChEBI" id="CHEBI:58053"/>
        <dbReference type="ChEBI" id="CHEBI:58189"/>
        <dbReference type="EC" id="6.3.4.4"/>
    </reaction>
</comment>
<comment type="cofactor">
    <cofactor evidence="1">
        <name>Mg(2+)</name>
        <dbReference type="ChEBI" id="CHEBI:18420"/>
    </cofactor>
    <text evidence="1">Binds 1 Mg(2+) ion per subunit.</text>
</comment>
<comment type="pathway">
    <text evidence="1">Purine metabolism; AMP biosynthesis via de novo pathway; AMP from IMP: step 1/2.</text>
</comment>
<comment type="subunit">
    <text evidence="1">Homodimer.</text>
</comment>
<comment type="subcellular location">
    <subcellularLocation>
        <location evidence="1">Cytoplasm</location>
    </subcellularLocation>
</comment>
<comment type="similarity">
    <text evidence="1">Belongs to the adenylosuccinate synthetase family.</text>
</comment>